<proteinExistence type="inferred from homology"/>
<name>HOA1_AZOVD</name>
<reference key="1">
    <citation type="journal article" date="2009" name="J. Bacteriol.">
        <title>Genome sequence of Azotobacter vinelandii, an obligate aerobe specialized to support diverse anaerobic metabolic processes.</title>
        <authorList>
            <person name="Setubal J.C."/>
            <person name="Dos Santos P."/>
            <person name="Goldman B.S."/>
            <person name="Ertesvaag H."/>
            <person name="Espin G."/>
            <person name="Rubio L.M."/>
            <person name="Valla S."/>
            <person name="Almeida N.F."/>
            <person name="Balasubramanian D."/>
            <person name="Cromes L."/>
            <person name="Curatti L."/>
            <person name="Du Z."/>
            <person name="Godsy E."/>
            <person name="Goodner B."/>
            <person name="Hellner-Burris K."/>
            <person name="Hernandez J.A."/>
            <person name="Houmiel K."/>
            <person name="Imperial J."/>
            <person name="Kennedy C."/>
            <person name="Larson T.J."/>
            <person name="Latreille P."/>
            <person name="Ligon L.S."/>
            <person name="Lu J."/>
            <person name="Maerk M."/>
            <person name="Miller N.M."/>
            <person name="Norton S."/>
            <person name="O'Carroll I.P."/>
            <person name="Paulsen I."/>
            <person name="Raulfs E.C."/>
            <person name="Roemer R."/>
            <person name="Rosser J."/>
            <person name="Segura D."/>
            <person name="Slater S."/>
            <person name="Stricklin S.L."/>
            <person name="Studholme D.J."/>
            <person name="Sun J."/>
            <person name="Viana C.J."/>
            <person name="Wallin E."/>
            <person name="Wang B."/>
            <person name="Wheeler C."/>
            <person name="Zhu H."/>
            <person name="Dean D.R."/>
            <person name="Dixon R."/>
            <person name="Wood D."/>
        </authorList>
    </citation>
    <scope>NUCLEOTIDE SEQUENCE [LARGE SCALE GENOMIC DNA]</scope>
    <source>
        <strain>DJ / ATCC BAA-1303</strain>
    </source>
</reference>
<accession>C1DMT5</accession>
<protein>
    <recommendedName>
        <fullName evidence="1">4-hydroxy-2-oxovalerate aldolase 1</fullName>
        <shortName evidence="1">HOA 1</shortName>
        <ecNumber evidence="1">4.1.3.39</ecNumber>
    </recommendedName>
    <alternativeName>
        <fullName evidence="1">4-hydroxy-2-keto-pentanoic acid aldolase 1</fullName>
    </alternativeName>
    <alternativeName>
        <fullName evidence="1">4-hydroxy-2-oxopentanoate aldolase 1</fullName>
    </alternativeName>
</protein>
<feature type="chain" id="PRO_0000387784" description="4-hydroxy-2-oxovalerate aldolase 1">
    <location>
        <begin position="1"/>
        <end position="349"/>
    </location>
</feature>
<feature type="domain" description="Pyruvate carboxyltransferase" evidence="1">
    <location>
        <begin position="9"/>
        <end position="261"/>
    </location>
</feature>
<feature type="active site" description="Proton acceptor" evidence="1">
    <location>
        <position position="21"/>
    </location>
</feature>
<feature type="binding site" evidence="1">
    <location>
        <begin position="17"/>
        <end position="18"/>
    </location>
    <ligand>
        <name>substrate</name>
    </ligand>
</feature>
<feature type="binding site" evidence="1">
    <location>
        <position position="18"/>
    </location>
    <ligand>
        <name>Mn(2+)</name>
        <dbReference type="ChEBI" id="CHEBI:29035"/>
    </ligand>
</feature>
<feature type="binding site" evidence="1">
    <location>
        <position position="171"/>
    </location>
    <ligand>
        <name>substrate</name>
    </ligand>
</feature>
<feature type="binding site" evidence="1">
    <location>
        <position position="200"/>
    </location>
    <ligand>
        <name>Mn(2+)</name>
        <dbReference type="ChEBI" id="CHEBI:29035"/>
    </ligand>
</feature>
<feature type="binding site" evidence="1">
    <location>
        <position position="200"/>
    </location>
    <ligand>
        <name>substrate</name>
    </ligand>
</feature>
<feature type="binding site" evidence="1">
    <location>
        <position position="202"/>
    </location>
    <ligand>
        <name>Mn(2+)</name>
        <dbReference type="ChEBI" id="CHEBI:29035"/>
    </ligand>
</feature>
<feature type="binding site" evidence="1">
    <location>
        <position position="291"/>
    </location>
    <ligand>
        <name>substrate</name>
    </ligand>
</feature>
<feature type="site" description="Transition state stabilizer" evidence="1">
    <location>
        <position position="17"/>
    </location>
</feature>
<evidence type="ECO:0000255" key="1">
    <source>
        <dbReference type="HAMAP-Rule" id="MF_01656"/>
    </source>
</evidence>
<gene>
    <name type="primary">xylK</name>
    <name type="ordered locus">Avin_08740</name>
</gene>
<sequence length="349" mass="37856">MTFDPHKKLYISDVTLRDGSHAVRHQYSIRNVQDIARALDKAKVDSIEVAHGDGLQGSSFNYGFGAHSDIEWIEAVAEVVTHARIATLLLPGIGTVHHLKEAYDAGARIVRVATHCTEADVSRQHIAYARELGMDTVGFLMMSHMTTPQNLAVEAKKMESYGATCIYVVDSGGALSMQDVRERFRAVKDLLEPSTQTGIHAHHNLSLGVANSIVAVEEGCDRIDASLAGMGAGAGNAPLEVFVAAAERLGWNHGTDLYTLMDAADEIVRPLQDRPVRVDRETLALGYAGVYSSFLRHAEVAASKYGLSTVDILVELGRRRMVGGQEDMIVDVALDLLRQRGDAARQAAV</sequence>
<comment type="catalytic activity">
    <reaction evidence="1">
        <text>(S)-4-hydroxy-2-oxopentanoate = acetaldehyde + pyruvate</text>
        <dbReference type="Rhea" id="RHEA:22624"/>
        <dbReference type="ChEBI" id="CHEBI:15343"/>
        <dbReference type="ChEBI" id="CHEBI:15361"/>
        <dbReference type="ChEBI" id="CHEBI:73143"/>
        <dbReference type="EC" id="4.1.3.39"/>
    </reaction>
</comment>
<comment type="similarity">
    <text evidence="1">Belongs to the 4-hydroxy-2-oxovalerate aldolase family.</text>
</comment>
<organism>
    <name type="scientific">Azotobacter vinelandii (strain DJ / ATCC BAA-1303)</name>
    <dbReference type="NCBI Taxonomy" id="322710"/>
    <lineage>
        <taxon>Bacteria</taxon>
        <taxon>Pseudomonadati</taxon>
        <taxon>Pseudomonadota</taxon>
        <taxon>Gammaproteobacteria</taxon>
        <taxon>Pseudomonadales</taxon>
        <taxon>Pseudomonadaceae</taxon>
        <taxon>Azotobacter</taxon>
    </lineage>
</organism>
<keyword id="KW-0058">Aromatic hydrocarbons catabolism</keyword>
<keyword id="KW-0456">Lyase</keyword>
<keyword id="KW-0464">Manganese</keyword>
<keyword id="KW-0479">Metal-binding</keyword>
<dbReference type="EC" id="4.1.3.39" evidence="1"/>
<dbReference type="EMBL" id="CP001157">
    <property type="protein sequence ID" value="ACO77115.1"/>
    <property type="molecule type" value="Genomic_DNA"/>
</dbReference>
<dbReference type="RefSeq" id="WP_012699540.1">
    <property type="nucleotide sequence ID" value="NC_012560.1"/>
</dbReference>
<dbReference type="SMR" id="C1DMT5"/>
<dbReference type="STRING" id="322710.Avin_08740"/>
<dbReference type="EnsemblBacteria" id="ACO77115">
    <property type="protein sequence ID" value="ACO77115"/>
    <property type="gene ID" value="Avin_08740"/>
</dbReference>
<dbReference type="GeneID" id="88184251"/>
<dbReference type="KEGG" id="avn:Avin_08740"/>
<dbReference type="eggNOG" id="COG0119">
    <property type="taxonomic scope" value="Bacteria"/>
</dbReference>
<dbReference type="HOGENOM" id="CLU_049173_0_0_6"/>
<dbReference type="OrthoDB" id="9803573at2"/>
<dbReference type="Proteomes" id="UP000002424">
    <property type="component" value="Chromosome"/>
</dbReference>
<dbReference type="GO" id="GO:0003852">
    <property type="term" value="F:2-isopropylmalate synthase activity"/>
    <property type="evidence" value="ECO:0007669"/>
    <property type="project" value="TreeGrafter"/>
</dbReference>
<dbReference type="GO" id="GO:0008701">
    <property type="term" value="F:4-hydroxy-2-oxovalerate aldolase activity"/>
    <property type="evidence" value="ECO:0007669"/>
    <property type="project" value="UniProtKB-UniRule"/>
</dbReference>
<dbReference type="GO" id="GO:0030145">
    <property type="term" value="F:manganese ion binding"/>
    <property type="evidence" value="ECO:0007669"/>
    <property type="project" value="UniProtKB-UniRule"/>
</dbReference>
<dbReference type="GO" id="GO:0009056">
    <property type="term" value="P:catabolic process"/>
    <property type="evidence" value="ECO:0007669"/>
    <property type="project" value="UniProtKB-KW"/>
</dbReference>
<dbReference type="GO" id="GO:0009098">
    <property type="term" value="P:L-leucine biosynthetic process"/>
    <property type="evidence" value="ECO:0007669"/>
    <property type="project" value="TreeGrafter"/>
</dbReference>
<dbReference type="CDD" id="cd07943">
    <property type="entry name" value="DRE_TIM_HOA"/>
    <property type="match status" value="1"/>
</dbReference>
<dbReference type="FunFam" id="1.10.8.60:FF:000042">
    <property type="entry name" value="4-hydroxy-2-oxovalerate aldolase"/>
    <property type="match status" value="1"/>
</dbReference>
<dbReference type="Gene3D" id="1.10.8.60">
    <property type="match status" value="1"/>
</dbReference>
<dbReference type="Gene3D" id="3.20.20.70">
    <property type="entry name" value="Aldolase class I"/>
    <property type="match status" value="1"/>
</dbReference>
<dbReference type="HAMAP" id="MF_01656">
    <property type="entry name" value="HOA"/>
    <property type="match status" value="1"/>
</dbReference>
<dbReference type="InterPro" id="IPR050073">
    <property type="entry name" value="2-IPM_HCS-like"/>
</dbReference>
<dbReference type="InterPro" id="IPR017629">
    <property type="entry name" value="4OH_2_O-val_aldolase"/>
</dbReference>
<dbReference type="InterPro" id="IPR013785">
    <property type="entry name" value="Aldolase_TIM"/>
</dbReference>
<dbReference type="InterPro" id="IPR012425">
    <property type="entry name" value="DmpG_comm"/>
</dbReference>
<dbReference type="InterPro" id="IPR035685">
    <property type="entry name" value="DRE_TIM_HOA"/>
</dbReference>
<dbReference type="InterPro" id="IPR000891">
    <property type="entry name" value="PYR_CT"/>
</dbReference>
<dbReference type="NCBIfam" id="TIGR03217">
    <property type="entry name" value="4OH_2_O_val_ald"/>
    <property type="match status" value="1"/>
</dbReference>
<dbReference type="NCBIfam" id="NF006049">
    <property type="entry name" value="PRK08195.1"/>
    <property type="match status" value="1"/>
</dbReference>
<dbReference type="PANTHER" id="PTHR10277:SF9">
    <property type="entry name" value="2-ISOPROPYLMALATE SYNTHASE 1, CHLOROPLASTIC-RELATED"/>
    <property type="match status" value="1"/>
</dbReference>
<dbReference type="PANTHER" id="PTHR10277">
    <property type="entry name" value="HOMOCITRATE SYNTHASE-RELATED"/>
    <property type="match status" value="1"/>
</dbReference>
<dbReference type="Pfam" id="PF07836">
    <property type="entry name" value="DmpG_comm"/>
    <property type="match status" value="1"/>
</dbReference>
<dbReference type="Pfam" id="PF00682">
    <property type="entry name" value="HMGL-like"/>
    <property type="match status" value="1"/>
</dbReference>
<dbReference type="SUPFAM" id="SSF51569">
    <property type="entry name" value="Aldolase"/>
    <property type="match status" value="1"/>
</dbReference>
<dbReference type="SUPFAM" id="SSF89000">
    <property type="entry name" value="post-HMGL domain-like"/>
    <property type="match status" value="1"/>
</dbReference>
<dbReference type="PROSITE" id="PS50991">
    <property type="entry name" value="PYR_CT"/>
    <property type="match status" value="1"/>
</dbReference>